<accession>P04479</accession>
<comment type="function">
    <text>This colicin is a channel-forming colicin. This class of transmembrane toxins depolarize the cytoplasmic membrane, leading to dissipation of cellular energy.</text>
</comment>
<comment type="function">
    <text>Colicins are polypeptide toxins produced by and active against E.coli and closely related bacteria.</text>
</comment>
<comment type="subcellular location">
    <subcellularLocation>
        <location evidence="3">Host membrane</location>
    </subcellularLocation>
</comment>
<comment type="similarity">
    <text evidence="3">Belongs to the channel forming colicin family.</text>
</comment>
<sequence>MSDPVRITNPGAESLGYDSDGHEIMAVDIYVNPPRVDVFHGTPPAWSSFGNKTIWGGNEWVDDSPTRSDIEKRDKEITAYKNTLSAQQKENENKRTEAGKRLSAAIAAREKDENTLKTLRAGNADAADITRQEFRLLQAELREYGFRTEIAGYDALRLHTESRMLFADADSLRISPREARSLIEQAEKRQKDAQNADKKAADMLAEYERRKGILDTRLSELEKNGGAALAVLDAQQARLLGQQTRNDRAISEARNKLSSVTESLKTARNALTRAEQQLTQQKNTPDGKTIVSPEKFPGRSSTNHSIVVSGDPRFAGTIKITTSAVIDNRANLNYLLTHSGLDYKRNILNDRNPVVTEDVEGDKKIYNAEVAEWDKLRQRLLDARNKITSAESAINSARNNVSARTNEQKHANDALNALLKEKENIRSQLADINQKIAEEKRKRDEINMVKDAIKLTSDFYRTIYDEFGKQASELAKELASVSQGKQIKSVDDALNAFDKFRNNLNKKYNIQDRMAISKALEAINQVHMAENFKLFSKAFGFTGKVIERYDVAVELQKAVKTDNWRPFFVKLESLAAGRAASAVTAWAFSVMLGTPVGILGFAIIMAAVSALVNDKFIEQVNKLIGI</sequence>
<organism>
    <name type="scientific">Escherichia coli</name>
    <dbReference type="NCBI Taxonomy" id="562"/>
    <lineage>
        <taxon>Bacteria</taxon>
        <taxon>Pseudomonadati</taxon>
        <taxon>Pseudomonadota</taxon>
        <taxon>Gammaproteobacteria</taxon>
        <taxon>Enterobacterales</taxon>
        <taxon>Enterobacteriaceae</taxon>
        <taxon>Escherichia</taxon>
    </lineage>
</organism>
<protein>
    <recommendedName>
        <fullName>Colicin-Ib</fullName>
    </recommendedName>
</protein>
<feature type="chain" id="PRO_0000218676" description="Colicin-Ib">
    <location>
        <begin position="1"/>
        <end position="626"/>
    </location>
</feature>
<feature type="transmembrane region" description="Helical" evidence="1">
    <location>
        <begin position="588"/>
        <end position="612"/>
    </location>
</feature>
<feature type="region of interest" description="Disordered" evidence="2">
    <location>
        <begin position="276"/>
        <end position="308"/>
    </location>
</feature>
<feature type="compositionally biased region" description="Polar residues" evidence="2">
    <location>
        <begin position="276"/>
        <end position="286"/>
    </location>
</feature>
<name>CEIB_ECOLX</name>
<keyword id="KW-0044">Antibiotic</keyword>
<keyword id="KW-0929">Antimicrobial</keyword>
<keyword id="KW-0078">Bacteriocin</keyword>
<keyword id="KW-1043">Host membrane</keyword>
<keyword id="KW-0472">Membrane</keyword>
<keyword id="KW-0614">Plasmid</keyword>
<keyword id="KW-0812">Transmembrane</keyword>
<keyword id="KW-1133">Transmembrane helix</keyword>
<evidence type="ECO:0000255" key="1"/>
<evidence type="ECO:0000256" key="2">
    <source>
        <dbReference type="SAM" id="MobiDB-lite"/>
    </source>
</evidence>
<evidence type="ECO:0000305" key="3"/>
<proteinExistence type="inferred from homology"/>
<reference key="1">
    <citation type="journal article" date="1986" name="J. Bacteriol.">
        <title>DNA and amino acid sequence analysis of structural and immunity genes of colicins Ia and Ib.</title>
        <authorList>
            <person name="Mankovich J.A."/>
            <person name="Hsu C.-H."/>
            <person name="Konisky J."/>
        </authorList>
    </citation>
    <scope>NUCLEOTIDE SEQUENCE [GENOMIC DNA]</scope>
</reference>
<reference key="2">
    <citation type="journal article" date="1984" name="J. Biol. Chem.">
        <title>Organization of the colicin Ib gene. Promoter structure and immunity domain.</title>
        <authorList>
            <person name="Mankovich J.A."/>
            <person name="Lai P.H."/>
            <person name="Gokul N."/>
            <person name="Konisky J."/>
        </authorList>
    </citation>
    <scope>NUCLEOTIDE SEQUENCE [GENOMIC DNA] OF 1-40</scope>
</reference>
<reference key="3">
    <citation type="journal article" date="1984" name="Nucleic Acids Res.">
        <title>Analysis of a cloned colicin Ib gene: complete nucleotide sequence and implications for regulation of expression.</title>
        <authorList>
            <person name="Varley J.M."/>
            <person name="Boulnois G.J."/>
        </authorList>
    </citation>
    <scope>NUCLEOTIDE SEQUENCE [GENOMIC DNA]</scope>
</reference>
<reference key="4">
    <citation type="journal article" date="1984" name="Nucleic Acids Res.">
        <authorList>
            <person name="Varley J.M."/>
            <person name="Boulnois G.J."/>
        </authorList>
    </citation>
    <scope>ERRATUM OF PUBMED:6091036</scope>
</reference>
<geneLocation type="plasmid">
    <name>IncI1 ColIb-P9</name>
</geneLocation>
<dbReference type="EMBL" id="K02071">
    <property type="protein sequence ID" value="AAA92225.1"/>
    <property type="molecule type" value="Genomic_DNA"/>
</dbReference>
<dbReference type="EMBL" id="X01009">
    <property type="protein sequence ID" value="CAA25505.1"/>
    <property type="molecule type" value="Genomic_DNA"/>
</dbReference>
<dbReference type="EMBL" id="M13820">
    <property type="protein sequence ID" value="AAA23188.1"/>
    <property type="molecule type" value="Genomic_DNA"/>
</dbReference>
<dbReference type="PIR" id="A93533">
    <property type="entry name" value="IKECB"/>
</dbReference>
<dbReference type="SMR" id="P04479"/>
<dbReference type="TCDB" id="1.C.1.1.2">
    <property type="family name" value="the channel-forming colicin (colicin) family"/>
</dbReference>
<dbReference type="GO" id="GO:0033644">
    <property type="term" value="C:host cell membrane"/>
    <property type="evidence" value="ECO:0007669"/>
    <property type="project" value="UniProtKB-SubCell"/>
</dbReference>
<dbReference type="GO" id="GO:0016020">
    <property type="term" value="C:membrane"/>
    <property type="evidence" value="ECO:0007669"/>
    <property type="project" value="UniProtKB-KW"/>
</dbReference>
<dbReference type="GO" id="GO:0140911">
    <property type="term" value="F:pore-forming activity"/>
    <property type="evidence" value="ECO:0007669"/>
    <property type="project" value="InterPro"/>
</dbReference>
<dbReference type="GO" id="GO:0050829">
    <property type="term" value="P:defense response to Gram-negative bacterium"/>
    <property type="evidence" value="ECO:0007669"/>
    <property type="project" value="InterPro"/>
</dbReference>
<dbReference type="GO" id="GO:0031640">
    <property type="term" value="P:killing of cells of another organism"/>
    <property type="evidence" value="ECO:0007669"/>
    <property type="project" value="UniProtKB-KW"/>
</dbReference>
<dbReference type="Gene3D" id="1.10.490.30">
    <property type="entry name" value="Colicin"/>
    <property type="match status" value="1"/>
</dbReference>
<dbReference type="Gene3D" id="1.20.250.10">
    <property type="entry name" value="Colicin Ia, domain 1"/>
    <property type="match status" value="2"/>
</dbReference>
<dbReference type="InterPro" id="IPR000293">
    <property type="entry name" value="Channel_colicin_C"/>
</dbReference>
<dbReference type="InterPro" id="IPR038283">
    <property type="entry name" value="Channel_colicin_C_sf"/>
</dbReference>
<dbReference type="InterPro" id="IPR014740">
    <property type="entry name" value="Channel_colicin_cen"/>
</dbReference>
<dbReference type="InterPro" id="IPR014739">
    <property type="entry name" value="Channel_colicin_N_sf"/>
</dbReference>
<dbReference type="Pfam" id="PF01024">
    <property type="entry name" value="Colicin"/>
    <property type="match status" value="1"/>
</dbReference>
<dbReference type="Pfam" id="PF11504">
    <property type="entry name" value="Colicin_Ia"/>
    <property type="match status" value="1"/>
</dbReference>
<dbReference type="PRINTS" id="PR00280">
    <property type="entry name" value="CHANLCOLICIN"/>
</dbReference>
<dbReference type="SUPFAM" id="SSF56837">
    <property type="entry name" value="Colicin"/>
    <property type="match status" value="1"/>
</dbReference>
<dbReference type="SUPFAM" id="SSF58096">
    <property type="entry name" value="Colicin Ia, N-terminal domain"/>
    <property type="match status" value="1"/>
</dbReference>
<dbReference type="PROSITE" id="PS00276">
    <property type="entry name" value="CHANNEL_COLICIN"/>
    <property type="match status" value="1"/>
</dbReference>
<gene>
    <name type="primary">cib</name>
</gene>